<organism>
    <name type="scientific">Shewanella sp. (strain W3-18-1)</name>
    <dbReference type="NCBI Taxonomy" id="351745"/>
    <lineage>
        <taxon>Bacteria</taxon>
        <taxon>Pseudomonadati</taxon>
        <taxon>Pseudomonadota</taxon>
        <taxon>Gammaproteobacteria</taxon>
        <taxon>Alteromonadales</taxon>
        <taxon>Shewanellaceae</taxon>
        <taxon>Shewanella</taxon>
    </lineage>
</organism>
<name>BIOB_SHESW</name>
<accession>A1RIK5</accession>
<protein>
    <recommendedName>
        <fullName evidence="1">Biotin synthase</fullName>
        <ecNumber evidence="1">2.8.1.6</ecNumber>
    </recommendedName>
</protein>
<sequence>MSQLQVRHDWKREEIEALFALPMNDLLFKAHSIHREVYDPNEVQISRLLSIKTGACPEDCKYCPQSARYDTGLEKERLLAMETVLTEARSAKAAGASRFCMGAAWRNPKEKDMPYLKQMVQEVKALGMETCMTLGMLSAEQANELADAGLDYYNHNLDTSPEYYGDVITTRTYQNRLDTLTHVRASGMKVCSGGIVGMGEKATDRAGLLQQLANLPQHPDSVPINMLVKVAGTPFEKLDDLDPLEFVRTIAVARILMPLSRVRLSAGRENMSDELQAMCFFAGANSIFYGCKLLTTPNPEESDDMGLFRRLGLRPEQGAVATLDDEQAVLAKAAAHQDKSTAQFYDAAAL</sequence>
<dbReference type="EC" id="2.8.1.6" evidence="1"/>
<dbReference type="EMBL" id="CP000503">
    <property type="protein sequence ID" value="ABM24500.1"/>
    <property type="molecule type" value="Genomic_DNA"/>
</dbReference>
<dbReference type="RefSeq" id="WP_011788998.1">
    <property type="nucleotide sequence ID" value="NC_008750.1"/>
</dbReference>
<dbReference type="SMR" id="A1RIK5"/>
<dbReference type="GeneID" id="67443930"/>
<dbReference type="KEGG" id="shw:Sputw3181_1663"/>
<dbReference type="HOGENOM" id="CLU_033172_1_2_6"/>
<dbReference type="UniPathway" id="UPA00078">
    <property type="reaction ID" value="UER00162"/>
</dbReference>
<dbReference type="Proteomes" id="UP000002597">
    <property type="component" value="Chromosome"/>
</dbReference>
<dbReference type="GO" id="GO:0051537">
    <property type="term" value="F:2 iron, 2 sulfur cluster binding"/>
    <property type="evidence" value="ECO:0007669"/>
    <property type="project" value="UniProtKB-KW"/>
</dbReference>
<dbReference type="GO" id="GO:0051539">
    <property type="term" value="F:4 iron, 4 sulfur cluster binding"/>
    <property type="evidence" value="ECO:0007669"/>
    <property type="project" value="UniProtKB-KW"/>
</dbReference>
<dbReference type="GO" id="GO:0004076">
    <property type="term" value="F:biotin synthase activity"/>
    <property type="evidence" value="ECO:0007669"/>
    <property type="project" value="UniProtKB-UniRule"/>
</dbReference>
<dbReference type="GO" id="GO:0005506">
    <property type="term" value="F:iron ion binding"/>
    <property type="evidence" value="ECO:0007669"/>
    <property type="project" value="UniProtKB-UniRule"/>
</dbReference>
<dbReference type="GO" id="GO:0009102">
    <property type="term" value="P:biotin biosynthetic process"/>
    <property type="evidence" value="ECO:0007669"/>
    <property type="project" value="UniProtKB-UniRule"/>
</dbReference>
<dbReference type="CDD" id="cd01335">
    <property type="entry name" value="Radical_SAM"/>
    <property type="match status" value="1"/>
</dbReference>
<dbReference type="FunFam" id="3.20.20.70:FF:000011">
    <property type="entry name" value="Biotin synthase"/>
    <property type="match status" value="1"/>
</dbReference>
<dbReference type="Gene3D" id="3.20.20.70">
    <property type="entry name" value="Aldolase class I"/>
    <property type="match status" value="1"/>
</dbReference>
<dbReference type="HAMAP" id="MF_01694">
    <property type="entry name" value="BioB"/>
    <property type="match status" value="1"/>
</dbReference>
<dbReference type="InterPro" id="IPR013785">
    <property type="entry name" value="Aldolase_TIM"/>
</dbReference>
<dbReference type="InterPro" id="IPR010722">
    <property type="entry name" value="BATS_dom"/>
</dbReference>
<dbReference type="InterPro" id="IPR002684">
    <property type="entry name" value="Biotin_synth/BioAB"/>
</dbReference>
<dbReference type="InterPro" id="IPR024177">
    <property type="entry name" value="Biotin_synthase"/>
</dbReference>
<dbReference type="InterPro" id="IPR006638">
    <property type="entry name" value="Elp3/MiaA/NifB-like_rSAM"/>
</dbReference>
<dbReference type="InterPro" id="IPR007197">
    <property type="entry name" value="rSAM"/>
</dbReference>
<dbReference type="NCBIfam" id="TIGR00433">
    <property type="entry name" value="bioB"/>
    <property type="match status" value="1"/>
</dbReference>
<dbReference type="PANTHER" id="PTHR22976">
    <property type="entry name" value="BIOTIN SYNTHASE"/>
    <property type="match status" value="1"/>
</dbReference>
<dbReference type="PANTHER" id="PTHR22976:SF2">
    <property type="entry name" value="BIOTIN SYNTHASE, MITOCHONDRIAL"/>
    <property type="match status" value="1"/>
</dbReference>
<dbReference type="Pfam" id="PF06968">
    <property type="entry name" value="BATS"/>
    <property type="match status" value="1"/>
</dbReference>
<dbReference type="Pfam" id="PF04055">
    <property type="entry name" value="Radical_SAM"/>
    <property type="match status" value="1"/>
</dbReference>
<dbReference type="PIRSF" id="PIRSF001619">
    <property type="entry name" value="Biotin_synth"/>
    <property type="match status" value="1"/>
</dbReference>
<dbReference type="SFLD" id="SFLDF00272">
    <property type="entry name" value="biotin_synthase"/>
    <property type="match status" value="1"/>
</dbReference>
<dbReference type="SFLD" id="SFLDS00029">
    <property type="entry name" value="Radical_SAM"/>
    <property type="match status" value="1"/>
</dbReference>
<dbReference type="SMART" id="SM00876">
    <property type="entry name" value="BATS"/>
    <property type="match status" value="1"/>
</dbReference>
<dbReference type="SMART" id="SM00729">
    <property type="entry name" value="Elp3"/>
    <property type="match status" value="1"/>
</dbReference>
<dbReference type="SUPFAM" id="SSF102114">
    <property type="entry name" value="Radical SAM enzymes"/>
    <property type="match status" value="1"/>
</dbReference>
<dbReference type="PROSITE" id="PS51918">
    <property type="entry name" value="RADICAL_SAM"/>
    <property type="match status" value="1"/>
</dbReference>
<keyword id="KW-0001">2Fe-2S</keyword>
<keyword id="KW-0004">4Fe-4S</keyword>
<keyword id="KW-0093">Biotin biosynthesis</keyword>
<keyword id="KW-0408">Iron</keyword>
<keyword id="KW-0411">Iron-sulfur</keyword>
<keyword id="KW-0479">Metal-binding</keyword>
<keyword id="KW-0949">S-adenosyl-L-methionine</keyword>
<keyword id="KW-0808">Transferase</keyword>
<proteinExistence type="inferred from homology"/>
<reference key="1">
    <citation type="submission" date="2006-12" db="EMBL/GenBank/DDBJ databases">
        <title>Complete sequence of Shewanella sp. W3-18-1.</title>
        <authorList>
            <consortium name="US DOE Joint Genome Institute"/>
            <person name="Copeland A."/>
            <person name="Lucas S."/>
            <person name="Lapidus A."/>
            <person name="Barry K."/>
            <person name="Detter J.C."/>
            <person name="Glavina del Rio T."/>
            <person name="Hammon N."/>
            <person name="Israni S."/>
            <person name="Dalin E."/>
            <person name="Tice H."/>
            <person name="Pitluck S."/>
            <person name="Chain P."/>
            <person name="Malfatti S."/>
            <person name="Shin M."/>
            <person name="Vergez L."/>
            <person name="Schmutz J."/>
            <person name="Larimer F."/>
            <person name="Land M."/>
            <person name="Hauser L."/>
            <person name="Kyrpides N."/>
            <person name="Lykidis A."/>
            <person name="Tiedje J."/>
            <person name="Richardson P."/>
        </authorList>
    </citation>
    <scope>NUCLEOTIDE SEQUENCE [LARGE SCALE GENOMIC DNA]</scope>
    <source>
        <strain>W3-18-1</strain>
    </source>
</reference>
<gene>
    <name evidence="1" type="primary">bioB</name>
    <name type="ordered locus">Sputw3181_1663</name>
</gene>
<feature type="chain" id="PRO_0000381629" description="Biotin synthase">
    <location>
        <begin position="1"/>
        <end position="350"/>
    </location>
</feature>
<feature type="domain" description="Radical SAM core" evidence="2">
    <location>
        <begin position="41"/>
        <end position="268"/>
    </location>
</feature>
<feature type="binding site" evidence="1">
    <location>
        <position position="56"/>
    </location>
    <ligand>
        <name>[4Fe-4S] cluster</name>
        <dbReference type="ChEBI" id="CHEBI:49883"/>
        <note>4Fe-4S-S-AdoMet</note>
    </ligand>
</feature>
<feature type="binding site" evidence="1">
    <location>
        <position position="60"/>
    </location>
    <ligand>
        <name>[4Fe-4S] cluster</name>
        <dbReference type="ChEBI" id="CHEBI:49883"/>
        <note>4Fe-4S-S-AdoMet</note>
    </ligand>
</feature>
<feature type="binding site" evidence="1">
    <location>
        <position position="63"/>
    </location>
    <ligand>
        <name>[4Fe-4S] cluster</name>
        <dbReference type="ChEBI" id="CHEBI:49883"/>
        <note>4Fe-4S-S-AdoMet</note>
    </ligand>
</feature>
<feature type="binding site" evidence="1">
    <location>
        <position position="100"/>
    </location>
    <ligand>
        <name>[2Fe-2S] cluster</name>
        <dbReference type="ChEBI" id="CHEBI:190135"/>
    </ligand>
</feature>
<feature type="binding site" evidence="1">
    <location>
        <position position="131"/>
    </location>
    <ligand>
        <name>[2Fe-2S] cluster</name>
        <dbReference type="ChEBI" id="CHEBI:190135"/>
    </ligand>
</feature>
<feature type="binding site" evidence="1">
    <location>
        <position position="191"/>
    </location>
    <ligand>
        <name>[2Fe-2S] cluster</name>
        <dbReference type="ChEBI" id="CHEBI:190135"/>
    </ligand>
</feature>
<feature type="binding site" evidence="1">
    <location>
        <position position="263"/>
    </location>
    <ligand>
        <name>[2Fe-2S] cluster</name>
        <dbReference type="ChEBI" id="CHEBI:190135"/>
    </ligand>
</feature>
<evidence type="ECO:0000255" key="1">
    <source>
        <dbReference type="HAMAP-Rule" id="MF_01694"/>
    </source>
</evidence>
<evidence type="ECO:0000255" key="2">
    <source>
        <dbReference type="PROSITE-ProRule" id="PRU01266"/>
    </source>
</evidence>
<comment type="function">
    <text evidence="1">Catalyzes the conversion of dethiobiotin (DTB) to biotin by the insertion of a sulfur atom into dethiobiotin via a radical-based mechanism.</text>
</comment>
<comment type="catalytic activity">
    <reaction evidence="1">
        <text>(4R,5S)-dethiobiotin + (sulfur carrier)-SH + 2 reduced [2Fe-2S]-[ferredoxin] + 2 S-adenosyl-L-methionine = (sulfur carrier)-H + biotin + 2 5'-deoxyadenosine + 2 L-methionine + 2 oxidized [2Fe-2S]-[ferredoxin]</text>
        <dbReference type="Rhea" id="RHEA:22060"/>
        <dbReference type="Rhea" id="RHEA-COMP:10000"/>
        <dbReference type="Rhea" id="RHEA-COMP:10001"/>
        <dbReference type="Rhea" id="RHEA-COMP:14737"/>
        <dbReference type="Rhea" id="RHEA-COMP:14739"/>
        <dbReference type="ChEBI" id="CHEBI:17319"/>
        <dbReference type="ChEBI" id="CHEBI:29917"/>
        <dbReference type="ChEBI" id="CHEBI:33737"/>
        <dbReference type="ChEBI" id="CHEBI:33738"/>
        <dbReference type="ChEBI" id="CHEBI:57586"/>
        <dbReference type="ChEBI" id="CHEBI:57844"/>
        <dbReference type="ChEBI" id="CHEBI:59789"/>
        <dbReference type="ChEBI" id="CHEBI:64428"/>
        <dbReference type="ChEBI" id="CHEBI:149473"/>
        <dbReference type="EC" id="2.8.1.6"/>
    </reaction>
</comment>
<comment type="cofactor">
    <cofactor evidence="1">
        <name>[4Fe-4S] cluster</name>
        <dbReference type="ChEBI" id="CHEBI:49883"/>
    </cofactor>
    <text evidence="1">Binds 1 [4Fe-4S] cluster. The cluster is coordinated with 3 cysteines and an exchangeable S-adenosyl-L-methionine.</text>
</comment>
<comment type="cofactor">
    <cofactor evidence="1">
        <name>[2Fe-2S] cluster</name>
        <dbReference type="ChEBI" id="CHEBI:190135"/>
    </cofactor>
    <text evidence="1">Binds 1 [2Fe-2S] cluster. The cluster is coordinated with 3 cysteines and 1 arginine.</text>
</comment>
<comment type="pathway">
    <text evidence="1">Cofactor biosynthesis; biotin biosynthesis; biotin from 7,8-diaminononanoate: step 2/2.</text>
</comment>
<comment type="subunit">
    <text evidence="1">Homodimer.</text>
</comment>
<comment type="similarity">
    <text evidence="1">Belongs to the radical SAM superfamily. Biotin synthase family.</text>
</comment>